<evidence type="ECO:0000255" key="1"/>
<evidence type="ECO:0000256" key="2">
    <source>
        <dbReference type="SAM" id="MobiDB-lite"/>
    </source>
</evidence>
<evidence type="ECO:0000305" key="3"/>
<gene>
    <name type="primary">Slc36a3</name>
    <name type="synonym">Pat3</name>
    <name type="synonym">Tramd2</name>
</gene>
<accession>Q4V8B1</accession>
<keyword id="KW-0472">Membrane</keyword>
<keyword id="KW-1185">Reference proteome</keyword>
<keyword id="KW-0812">Transmembrane</keyword>
<keyword id="KW-1133">Transmembrane helix</keyword>
<reference key="1">
    <citation type="journal article" date="2004" name="Genome Res.">
        <title>The status, quality, and expansion of the NIH full-length cDNA project: the Mammalian Gene Collection (MGC).</title>
        <authorList>
            <consortium name="The MGC Project Team"/>
        </authorList>
    </citation>
    <scope>NUCLEOTIDE SEQUENCE [LARGE SCALE MRNA]</scope>
    <source>
        <tissue>Testis</tissue>
    </source>
</reference>
<proteinExistence type="evidence at transcript level"/>
<dbReference type="EMBL" id="BC097463">
    <property type="protein sequence ID" value="AAH97463.1"/>
    <property type="molecule type" value="mRNA"/>
</dbReference>
<dbReference type="RefSeq" id="NP_001019935.1">
    <property type="nucleotide sequence ID" value="NM_001024764.1"/>
</dbReference>
<dbReference type="RefSeq" id="XP_008765907.1">
    <property type="nucleotide sequence ID" value="XM_008767685.4"/>
</dbReference>
<dbReference type="SMR" id="Q4V8B1"/>
<dbReference type="FunCoup" id="Q4V8B1">
    <property type="interactions" value="205"/>
</dbReference>
<dbReference type="STRING" id="10116.ENSRNOP00000037827"/>
<dbReference type="PhosphoSitePlus" id="Q4V8B1"/>
<dbReference type="PaxDb" id="10116-ENSRNOP00000037827"/>
<dbReference type="Ensembl" id="ENSRNOT00000037274.6">
    <property type="protein sequence ID" value="ENSRNOP00000037827.4"/>
    <property type="gene ID" value="ENSRNOG00000021310.6"/>
</dbReference>
<dbReference type="GeneID" id="303148"/>
<dbReference type="KEGG" id="rno:303148"/>
<dbReference type="UCSC" id="RGD:1309092">
    <property type="organism name" value="rat"/>
</dbReference>
<dbReference type="AGR" id="RGD:1309092"/>
<dbReference type="CTD" id="285641"/>
<dbReference type="RGD" id="1309092">
    <property type="gene designation" value="Slc36a3"/>
</dbReference>
<dbReference type="eggNOG" id="KOG1304">
    <property type="taxonomic scope" value="Eukaryota"/>
</dbReference>
<dbReference type="GeneTree" id="ENSGT00940000162406"/>
<dbReference type="HOGENOM" id="CLU_009646_0_2_1"/>
<dbReference type="InParanoid" id="Q4V8B1"/>
<dbReference type="OMA" id="NQMKNPQ"/>
<dbReference type="OrthoDB" id="84252at9989"/>
<dbReference type="PhylomeDB" id="Q4V8B1"/>
<dbReference type="TreeFam" id="TF314873"/>
<dbReference type="PRO" id="PR:Q4V8B1"/>
<dbReference type="Proteomes" id="UP000002494">
    <property type="component" value="Chromosome 10"/>
</dbReference>
<dbReference type="Bgee" id="ENSRNOG00000021310">
    <property type="expression patterns" value="Expressed in testis and 3 other cell types or tissues"/>
</dbReference>
<dbReference type="GO" id="GO:0005774">
    <property type="term" value="C:vacuolar membrane"/>
    <property type="evidence" value="ECO:0000318"/>
    <property type="project" value="GO_Central"/>
</dbReference>
<dbReference type="GO" id="GO:0022853">
    <property type="term" value="F:active monoatomic ion transmembrane transporter activity"/>
    <property type="evidence" value="ECO:0007669"/>
    <property type="project" value="UniProtKB-ARBA"/>
</dbReference>
<dbReference type="GO" id="GO:0005280">
    <property type="term" value="F:amino acid:proton symporter activity"/>
    <property type="evidence" value="ECO:0000318"/>
    <property type="project" value="GO_Central"/>
</dbReference>
<dbReference type="GO" id="GO:0015187">
    <property type="term" value="F:glycine transmembrane transporter activity"/>
    <property type="evidence" value="ECO:0000318"/>
    <property type="project" value="GO_Central"/>
</dbReference>
<dbReference type="GO" id="GO:0015180">
    <property type="term" value="F:L-alanine transmembrane transporter activity"/>
    <property type="evidence" value="ECO:0000318"/>
    <property type="project" value="GO_Central"/>
</dbReference>
<dbReference type="GO" id="GO:0015193">
    <property type="term" value="F:L-proline transmembrane transporter activity"/>
    <property type="evidence" value="ECO:0000318"/>
    <property type="project" value="GO_Central"/>
</dbReference>
<dbReference type="GO" id="GO:0015816">
    <property type="term" value="P:glycine transport"/>
    <property type="evidence" value="ECO:0000318"/>
    <property type="project" value="GO_Central"/>
</dbReference>
<dbReference type="GO" id="GO:0015808">
    <property type="term" value="P:L-alanine transport"/>
    <property type="evidence" value="ECO:0000318"/>
    <property type="project" value="GO_Central"/>
</dbReference>
<dbReference type="GO" id="GO:0035524">
    <property type="term" value="P:proline transmembrane transport"/>
    <property type="evidence" value="ECO:0000318"/>
    <property type="project" value="GO_Central"/>
</dbReference>
<dbReference type="GO" id="GO:1902600">
    <property type="term" value="P:proton transmembrane transport"/>
    <property type="evidence" value="ECO:0000318"/>
    <property type="project" value="GO_Central"/>
</dbReference>
<dbReference type="InterPro" id="IPR013057">
    <property type="entry name" value="AA_transpt_TM"/>
</dbReference>
<dbReference type="PANTHER" id="PTHR22950">
    <property type="entry name" value="AMINO ACID TRANSPORTER"/>
    <property type="match status" value="1"/>
</dbReference>
<dbReference type="PANTHER" id="PTHR22950:SF258">
    <property type="entry name" value="PROTON-COUPLED AMINO ACID TRANSPORTER 3"/>
    <property type="match status" value="1"/>
</dbReference>
<dbReference type="Pfam" id="PF01490">
    <property type="entry name" value="Aa_trans"/>
    <property type="match status" value="1"/>
</dbReference>
<name>S36A3_RAT</name>
<comment type="subcellular location">
    <subcellularLocation>
        <location evidence="3">Membrane</location>
        <topology evidence="3">Multi-pass membrane protein</topology>
    </subcellularLocation>
</comment>
<comment type="similarity">
    <text evidence="3">Belongs to the amino acid/polyamine transporter 2 family.</text>
</comment>
<sequence>MGKTPLLREDGRCQRNTFGGSKASSKGSSSSSSNNTVSSKKKPRRKADALMFIQIFIHLLKSNIGTGFLGLPLAVKNAGLLVGPVSLLAIGALTVHCMDILLNCACHLTSRLQRSFVNYEETTMYSLETCPSPWLRTHSVWGRYVVSFLLIVTQLGFCSVYFMFMADNLQQIVEEAHFTSNVCQPRQSLVMTSILDTRFYMLTILPFLILLVLVQNPQVLSIFSTLATITTLSSLALIFEYLIQIPHHSHLPLVASWKTFLLFFGTAIFTFEGVGMVLPLKSQMKSPQQFPAVLYLGMSFVIFLYICLGTLGYMKFGADTQASITLNLPNCWLYQSVKLMYSVGIFFTYALQFHVPAEIIVPYVVSRASENWALFIDLTVRAALVCLTCFSAVLIPRLDLVISLVGSVSSSALALIIPPLLEIATFYSENISCTTIAKDIMISILGLLGCVLGTYQALYEMTQQSRFPMLNSTNVHT</sequence>
<feature type="chain" id="PRO_0000326206" description="Proton-coupled amino acid transporter 3">
    <location>
        <begin position="1"/>
        <end position="477"/>
    </location>
</feature>
<feature type="topological domain" description="Cytoplasmic" evidence="1">
    <location>
        <begin position="1"/>
        <end position="54"/>
    </location>
</feature>
<feature type="transmembrane region" description="Helical" evidence="1">
    <location>
        <begin position="55"/>
        <end position="75"/>
    </location>
</feature>
<feature type="topological domain" description="Extracellular" evidence="1">
    <location>
        <begin position="76"/>
        <end position="77"/>
    </location>
</feature>
<feature type="transmembrane region" description="Helical" evidence="1">
    <location>
        <begin position="78"/>
        <end position="98"/>
    </location>
</feature>
<feature type="topological domain" description="Cytoplasmic" evidence="1">
    <location>
        <begin position="99"/>
        <end position="144"/>
    </location>
</feature>
<feature type="transmembrane region" description="Helical" evidence="1">
    <location>
        <begin position="145"/>
        <end position="165"/>
    </location>
</feature>
<feature type="topological domain" description="Extracellular" evidence="1">
    <location>
        <begin position="166"/>
        <end position="202"/>
    </location>
</feature>
<feature type="transmembrane region" description="Helical" evidence="1">
    <location>
        <begin position="203"/>
        <end position="223"/>
    </location>
</feature>
<feature type="topological domain" description="Cytoplasmic" evidence="1">
    <location>
        <begin position="224"/>
        <end position="225"/>
    </location>
</feature>
<feature type="transmembrane region" description="Helical" evidence="1">
    <location>
        <begin position="226"/>
        <end position="246"/>
    </location>
</feature>
<feature type="topological domain" description="Extracellular" evidence="1">
    <location>
        <begin position="247"/>
        <end position="259"/>
    </location>
</feature>
<feature type="transmembrane region" description="Helical" evidence="1">
    <location>
        <begin position="260"/>
        <end position="280"/>
    </location>
</feature>
<feature type="topological domain" description="Cytoplasmic" evidence="1">
    <location>
        <begin position="281"/>
        <end position="291"/>
    </location>
</feature>
<feature type="transmembrane region" description="Helical" evidence="1">
    <location>
        <begin position="292"/>
        <end position="312"/>
    </location>
</feature>
<feature type="topological domain" description="Extracellular" evidence="1">
    <location>
        <begin position="313"/>
        <end position="344"/>
    </location>
</feature>
<feature type="transmembrane region" description="Helical" evidence="1">
    <location>
        <begin position="345"/>
        <end position="365"/>
    </location>
</feature>
<feature type="topological domain" description="Cytoplasmic" evidence="1">
    <location>
        <begin position="366"/>
        <end position="374"/>
    </location>
</feature>
<feature type="transmembrane region" description="Helical" evidence="1">
    <location>
        <begin position="375"/>
        <end position="395"/>
    </location>
</feature>
<feature type="topological domain" description="Extracellular" evidence="1">
    <location>
        <begin position="396"/>
        <end position="399"/>
    </location>
</feature>
<feature type="transmembrane region" description="Helical" evidence="1">
    <location>
        <begin position="400"/>
        <end position="420"/>
    </location>
</feature>
<feature type="topological domain" description="Cytoplasmic" evidence="1">
    <location>
        <begin position="421"/>
        <end position="439"/>
    </location>
</feature>
<feature type="transmembrane region" description="Helical" evidence="1">
    <location>
        <begin position="440"/>
        <end position="460"/>
    </location>
</feature>
<feature type="topological domain" description="Extracellular" evidence="1">
    <location>
        <begin position="461"/>
        <end position="477"/>
    </location>
</feature>
<feature type="region of interest" description="Disordered" evidence="2">
    <location>
        <begin position="1"/>
        <end position="42"/>
    </location>
</feature>
<feature type="compositionally biased region" description="Basic and acidic residues" evidence="2">
    <location>
        <begin position="1"/>
        <end position="13"/>
    </location>
</feature>
<feature type="compositionally biased region" description="Low complexity" evidence="2">
    <location>
        <begin position="19"/>
        <end position="38"/>
    </location>
</feature>
<organism>
    <name type="scientific">Rattus norvegicus</name>
    <name type="common">Rat</name>
    <dbReference type="NCBI Taxonomy" id="10116"/>
    <lineage>
        <taxon>Eukaryota</taxon>
        <taxon>Metazoa</taxon>
        <taxon>Chordata</taxon>
        <taxon>Craniata</taxon>
        <taxon>Vertebrata</taxon>
        <taxon>Euteleostomi</taxon>
        <taxon>Mammalia</taxon>
        <taxon>Eutheria</taxon>
        <taxon>Euarchontoglires</taxon>
        <taxon>Glires</taxon>
        <taxon>Rodentia</taxon>
        <taxon>Myomorpha</taxon>
        <taxon>Muroidea</taxon>
        <taxon>Muridae</taxon>
        <taxon>Murinae</taxon>
        <taxon>Rattus</taxon>
    </lineage>
</organism>
<protein>
    <recommendedName>
        <fullName>Proton-coupled amino acid transporter 3</fullName>
        <shortName>Proton/amino acid transporter 3</shortName>
    </recommendedName>
    <alternativeName>
        <fullName>Solute carrier family 36 member 3</fullName>
    </alternativeName>
    <alternativeName>
        <fullName>Tramdorin-2</fullName>
    </alternativeName>
</protein>